<keyword id="KW-0066">ATP synthesis</keyword>
<keyword id="KW-1003">Cell membrane</keyword>
<keyword id="KW-0375">Hydrogen ion transport</keyword>
<keyword id="KW-0406">Ion transport</keyword>
<keyword id="KW-0472">Membrane</keyword>
<keyword id="KW-1185">Reference proteome</keyword>
<keyword id="KW-0813">Transport</keyword>
<organism>
    <name type="scientific">Haloferax volcanii (strain ATCC 29605 / DSM 3757 / JCM 8879 / NBRC 14742 / NCIMB 2012 / VKM B-1768 / DS2)</name>
    <name type="common">Halobacterium volcanii</name>
    <dbReference type="NCBI Taxonomy" id="309800"/>
    <lineage>
        <taxon>Archaea</taxon>
        <taxon>Methanobacteriati</taxon>
        <taxon>Methanobacteriota</taxon>
        <taxon>Stenosarchaea group</taxon>
        <taxon>Halobacteria</taxon>
        <taxon>Halobacteriales</taxon>
        <taxon>Haloferacaceae</taxon>
        <taxon>Haloferax</taxon>
    </lineage>
</organism>
<evidence type="ECO:0000255" key="1">
    <source>
        <dbReference type="HAMAP-Rule" id="MF_00311"/>
    </source>
</evidence>
<comment type="function">
    <text evidence="1">Component of the A-type ATP synthase that produces ATP from ADP in the presence of a proton gradient across the membrane.</text>
</comment>
<comment type="subunit">
    <text evidence="1">Has multiple subunits with at least A(3), B(3), C, D, E, F, H, I and proteolipid K(x).</text>
</comment>
<comment type="subcellular location">
    <subcellularLocation>
        <location evidence="1">Cell membrane</location>
        <topology evidence="1">Peripheral membrane protein</topology>
    </subcellularLocation>
</comment>
<comment type="similarity">
    <text evidence="1">Belongs to the V-ATPase E subunit family.</text>
</comment>
<reference key="1">
    <citation type="journal article" date="1995" name="Biochim. Biophys. Acta">
        <title>Nucleotide sequence of the ATPase A- and B-subunits of the halophilic archaebacterium Haloferax volcanii and characterization of the enzyme.</title>
        <authorList>
            <person name="Steinert K."/>
            <person name="Kroth-Pancic P.G."/>
            <person name="Bickel-Sandkoetter S."/>
        </authorList>
    </citation>
    <scope>NUCLEOTIDE SEQUENCE [GENOMIC DNA]</scope>
    <source>
        <strain>DS2 / WR 340</strain>
    </source>
</reference>
<reference key="2">
    <citation type="journal article" date="2010" name="PLoS ONE">
        <title>The complete genome sequence of Haloferax volcanii DS2, a model archaeon.</title>
        <authorList>
            <person name="Hartman A.L."/>
            <person name="Norais C."/>
            <person name="Badger J.H."/>
            <person name="Delmas S."/>
            <person name="Haldenby S."/>
            <person name="Madupu R."/>
            <person name="Robinson J."/>
            <person name="Khouri H."/>
            <person name="Ren Q."/>
            <person name="Lowe T.M."/>
            <person name="Maupin-Furlow J."/>
            <person name="Pohlschroder M."/>
            <person name="Daniels C."/>
            <person name="Pfeiffer F."/>
            <person name="Allers T."/>
            <person name="Eisen J.A."/>
        </authorList>
    </citation>
    <scope>NUCLEOTIDE SEQUENCE [LARGE SCALE GENOMIC DNA]</scope>
    <source>
        <strain>ATCC 29605 / DSM 3757 / JCM 8879 / NBRC 14742 / NCIMB 2012 / VKM B-1768 / DS2</strain>
    </source>
</reference>
<feature type="chain" id="PRO_0000117314" description="A-type ATP synthase subunit E">
    <location>
        <begin position="1"/>
        <end position="194"/>
    </location>
</feature>
<sequence length="194" mass="22025">MSLDNVVEDIRDEARARAEDIRQDGQEQADEIVAEAEADAEELLESRKADVEQQLEREREQALSSAKLEAKQARLSARRDVLQRVREQVERELAELEGDRREELTRSLLDAAAVEFEDADEVSVYGRADDEELLSSILEDYDGYEFAGERDCLGGVVVEGSNSRVRVNNTFDSVLDTVWEDNLKEVSARLFDDQ</sequence>
<gene>
    <name evidence="1" type="primary">atpE</name>
    <name type="synonym">atpD</name>
    <name type="ordered locus">HVO_0313</name>
</gene>
<proteinExistence type="inferred from homology"/>
<protein>
    <recommendedName>
        <fullName evidence="1">A-type ATP synthase subunit E</fullName>
    </recommendedName>
</protein>
<name>AATE_HALVD</name>
<accession>Q48329</accession>
<accession>D4GZU2</accession>
<dbReference type="EMBL" id="X79516">
    <property type="protein sequence ID" value="CAA56048.1"/>
    <property type="molecule type" value="Genomic_DNA"/>
</dbReference>
<dbReference type="EMBL" id="CP001956">
    <property type="protein sequence ID" value="ADE04461.1"/>
    <property type="molecule type" value="Genomic_DNA"/>
</dbReference>
<dbReference type="PIR" id="T47200">
    <property type="entry name" value="T47200"/>
</dbReference>
<dbReference type="RefSeq" id="WP_004044610.1">
    <property type="nucleotide sequence ID" value="NC_013967.1"/>
</dbReference>
<dbReference type="SMR" id="Q48329"/>
<dbReference type="STRING" id="309800.HVO_0313"/>
<dbReference type="PaxDb" id="309800-C498_17123"/>
<dbReference type="EnsemblBacteria" id="ADE04461">
    <property type="protein sequence ID" value="ADE04461"/>
    <property type="gene ID" value="HVO_0313"/>
</dbReference>
<dbReference type="GeneID" id="8926671"/>
<dbReference type="KEGG" id="hvo:HVO_0313"/>
<dbReference type="eggNOG" id="arCOG00869">
    <property type="taxonomic scope" value="Archaea"/>
</dbReference>
<dbReference type="HOGENOM" id="CLU_120786_0_0_2"/>
<dbReference type="OrthoDB" id="4691at2157"/>
<dbReference type="Proteomes" id="UP000008243">
    <property type="component" value="Chromosome"/>
</dbReference>
<dbReference type="GO" id="GO:0005886">
    <property type="term" value="C:plasma membrane"/>
    <property type="evidence" value="ECO:0007669"/>
    <property type="project" value="UniProtKB-SubCell"/>
</dbReference>
<dbReference type="GO" id="GO:0033178">
    <property type="term" value="C:proton-transporting two-sector ATPase complex, catalytic domain"/>
    <property type="evidence" value="ECO:0007669"/>
    <property type="project" value="InterPro"/>
</dbReference>
<dbReference type="GO" id="GO:0005524">
    <property type="term" value="F:ATP binding"/>
    <property type="evidence" value="ECO:0007669"/>
    <property type="project" value="UniProtKB-UniRule"/>
</dbReference>
<dbReference type="GO" id="GO:0046933">
    <property type="term" value="F:proton-transporting ATP synthase activity, rotational mechanism"/>
    <property type="evidence" value="ECO:0007669"/>
    <property type="project" value="UniProtKB-UniRule"/>
</dbReference>
<dbReference type="GO" id="GO:0046961">
    <property type="term" value="F:proton-transporting ATPase activity, rotational mechanism"/>
    <property type="evidence" value="ECO:0007669"/>
    <property type="project" value="InterPro"/>
</dbReference>
<dbReference type="GO" id="GO:0042777">
    <property type="term" value="P:proton motive force-driven plasma membrane ATP synthesis"/>
    <property type="evidence" value="ECO:0007669"/>
    <property type="project" value="UniProtKB-UniRule"/>
</dbReference>
<dbReference type="Gene3D" id="3.30.2320.30">
    <property type="entry name" value="ATP synthase, E subunit, C-terminal"/>
    <property type="match status" value="1"/>
</dbReference>
<dbReference type="Gene3D" id="1.20.5.620">
    <property type="entry name" value="F1F0 ATP synthase subunit B, membrane domain"/>
    <property type="match status" value="1"/>
</dbReference>
<dbReference type="HAMAP" id="MF_00311">
    <property type="entry name" value="ATP_synth_E_arch"/>
    <property type="match status" value="1"/>
</dbReference>
<dbReference type="InterPro" id="IPR038495">
    <property type="entry name" value="ATPase_E_C"/>
</dbReference>
<dbReference type="InterPro" id="IPR002842">
    <property type="entry name" value="ATPase_V1_Esu"/>
</dbReference>
<dbReference type="NCBIfam" id="NF002629">
    <property type="entry name" value="PRK02292.1"/>
    <property type="match status" value="1"/>
</dbReference>
<dbReference type="PANTHER" id="PTHR45715">
    <property type="entry name" value="ATPASE H+-TRANSPORTING V1 SUBUNIT E1A-RELATED"/>
    <property type="match status" value="1"/>
</dbReference>
<dbReference type="Pfam" id="PF01991">
    <property type="entry name" value="vATP-synt_E"/>
    <property type="match status" value="1"/>
</dbReference>
<dbReference type="SUPFAM" id="SSF160527">
    <property type="entry name" value="V-type ATPase subunit E-like"/>
    <property type="match status" value="1"/>
</dbReference>